<organism>
    <name type="scientific">Mus musculus</name>
    <name type="common">Mouse</name>
    <dbReference type="NCBI Taxonomy" id="10090"/>
    <lineage>
        <taxon>Eukaryota</taxon>
        <taxon>Metazoa</taxon>
        <taxon>Chordata</taxon>
        <taxon>Craniata</taxon>
        <taxon>Vertebrata</taxon>
        <taxon>Euteleostomi</taxon>
        <taxon>Mammalia</taxon>
        <taxon>Eutheria</taxon>
        <taxon>Euarchontoglires</taxon>
        <taxon>Glires</taxon>
        <taxon>Rodentia</taxon>
        <taxon>Myomorpha</taxon>
        <taxon>Muroidea</taxon>
        <taxon>Muridae</taxon>
        <taxon>Murinae</taxon>
        <taxon>Mus</taxon>
        <taxon>Mus</taxon>
    </lineage>
</organism>
<gene>
    <name evidence="6" type="primary">Paqr4</name>
    <name type="ORF">MNCb-0914</name>
</gene>
<comment type="function">
    <text evidence="3">Plays a role in maintaining adipose tissue function through the regulation of ceramide levels (PubMed:38961186). Mediates the stability of ceramide synthetases, CERS2 and CERS5, and their activities (PubMed:38961186).</text>
</comment>
<comment type="subunit">
    <text evidence="3">Interacts with CERS2 and CERS5; the interaction regulates CERS2 and CERS5 stabilities and activities and is inhibited in presence of ceramides.</text>
</comment>
<comment type="subcellular location">
    <subcellularLocation>
        <location evidence="1">Golgi apparatus membrane</location>
        <topology evidence="2">Multi-pass membrane protein</topology>
    </subcellularLocation>
</comment>
<comment type="tissue specificity">
    <text evidence="3">Expressed in adipose tissue.</text>
</comment>
<comment type="induction">
    <text evidence="3">Upon high fat diet, expression is induced in adipose tissue but not in heart.</text>
</comment>
<comment type="disruption phenotype">
    <text evidence="3">Knockouts adipocyte-specific show a normal phenotype (PubMed:38961186). Upon high fat diet, body weight gain is comparable to widtype after 18 weeks. Liver weight is reduced with diminished steatosis and brown adipose tissue mass is reduced. Animals show an improved glucose and insulin tolerance (PubMed:38961186).</text>
</comment>
<comment type="similarity">
    <text evidence="5">Belongs to the ADIPOR family.</text>
</comment>
<comment type="caution">
    <text evidence="3">Seems to not act as a 'classical' recpetor. Initially described as a ceramidase, recent evidence disputes this direct ceramidase activity. Instead, it suggests that PAQR4 regulates ceramide levels through its interaction with ceramide synthetases.</text>
</comment>
<evidence type="ECO:0000250" key="1">
    <source>
        <dbReference type="UniProtKB" id="Q8N4S7"/>
    </source>
</evidence>
<evidence type="ECO:0000255" key="2"/>
<evidence type="ECO:0000269" key="3">
    <source>
    </source>
</evidence>
<evidence type="ECO:0000303" key="4">
    <source>
    </source>
</evidence>
<evidence type="ECO:0000305" key="5"/>
<evidence type="ECO:0000312" key="6">
    <source>
        <dbReference type="MGI" id="MGI:1923748"/>
    </source>
</evidence>
<accession>Q9JJE4</accession>
<accession>Q3U7G1</accession>
<feature type="chain" id="PRO_0000218849" description="Progestin and adipoQ receptor family member 4">
    <location>
        <begin position="1"/>
        <end position="273"/>
    </location>
</feature>
<feature type="transmembrane region" description="Helical" evidence="2">
    <location>
        <begin position="52"/>
        <end position="72"/>
    </location>
</feature>
<feature type="transmembrane region" description="Helical" evidence="2">
    <location>
        <begin position="79"/>
        <end position="99"/>
    </location>
</feature>
<feature type="transmembrane region" description="Helical" evidence="2">
    <location>
        <begin position="115"/>
        <end position="135"/>
    </location>
</feature>
<feature type="transmembrane region" description="Helical" evidence="2">
    <location>
        <begin position="185"/>
        <end position="205"/>
    </location>
</feature>
<feature type="transmembrane region" description="Helical" evidence="2">
    <location>
        <begin position="245"/>
        <end position="265"/>
    </location>
</feature>
<proteinExistence type="evidence at transcript level"/>
<dbReference type="EMBL" id="AY424293">
    <property type="protein sequence ID" value="AAR08381.1"/>
    <property type="molecule type" value="mRNA"/>
</dbReference>
<dbReference type="EMBL" id="AB041564">
    <property type="protein sequence ID" value="BAA95048.1"/>
    <property type="molecule type" value="mRNA"/>
</dbReference>
<dbReference type="EMBL" id="AK005142">
    <property type="protein sequence ID" value="BAB23839.1"/>
    <property type="molecule type" value="mRNA"/>
</dbReference>
<dbReference type="EMBL" id="AK033625">
    <property type="protein sequence ID" value="BAC28398.1"/>
    <property type="molecule type" value="mRNA"/>
</dbReference>
<dbReference type="EMBL" id="AK044092">
    <property type="protein sequence ID" value="BAC31770.1"/>
    <property type="molecule type" value="mRNA"/>
</dbReference>
<dbReference type="EMBL" id="AK044486">
    <property type="protein sequence ID" value="BAC31947.1"/>
    <property type="molecule type" value="mRNA"/>
</dbReference>
<dbReference type="EMBL" id="AK152676">
    <property type="protein sequence ID" value="BAE31408.1"/>
    <property type="molecule type" value="mRNA"/>
</dbReference>
<dbReference type="EMBL" id="BC011185">
    <property type="protein sequence ID" value="AAH11185.1"/>
    <property type="molecule type" value="mRNA"/>
</dbReference>
<dbReference type="EMBL" id="BC026921">
    <property type="protein sequence ID" value="AAH26921.1"/>
    <property type="molecule type" value="mRNA"/>
</dbReference>
<dbReference type="CCDS" id="CCDS28461.1"/>
<dbReference type="RefSeq" id="NP_076313.1">
    <property type="nucleotide sequence ID" value="NM_023824.3"/>
</dbReference>
<dbReference type="SMR" id="Q9JJE4"/>
<dbReference type="FunCoup" id="Q9JJE4">
    <property type="interactions" value="40"/>
</dbReference>
<dbReference type="STRING" id="10090.ENSMUSP00000024702"/>
<dbReference type="iPTMnet" id="Q9JJE4"/>
<dbReference type="PhosphoSitePlus" id="Q9JJE4"/>
<dbReference type="SwissPalm" id="Q9JJE4"/>
<dbReference type="PaxDb" id="10090-ENSMUSP00000024702"/>
<dbReference type="PeptideAtlas" id="Q9JJE4"/>
<dbReference type="ProteomicsDB" id="287948"/>
<dbReference type="Pumba" id="Q9JJE4"/>
<dbReference type="Antibodypedia" id="42629">
    <property type="antibodies" value="30 antibodies from 13 providers"/>
</dbReference>
<dbReference type="DNASU" id="76498"/>
<dbReference type="Ensembl" id="ENSMUST00000024702.5">
    <property type="protein sequence ID" value="ENSMUSP00000024702.4"/>
    <property type="gene ID" value="ENSMUSG00000023909.5"/>
</dbReference>
<dbReference type="GeneID" id="76498"/>
<dbReference type="KEGG" id="mmu:76498"/>
<dbReference type="UCSC" id="uc008atb.1">
    <property type="organism name" value="mouse"/>
</dbReference>
<dbReference type="AGR" id="MGI:1923748"/>
<dbReference type="CTD" id="124222"/>
<dbReference type="MGI" id="MGI:1923748">
    <property type="gene designation" value="Paqr4"/>
</dbReference>
<dbReference type="VEuPathDB" id="HostDB:ENSMUSG00000023909"/>
<dbReference type="eggNOG" id="KOG0748">
    <property type="taxonomic scope" value="Eukaryota"/>
</dbReference>
<dbReference type="GeneTree" id="ENSGT00940000157978"/>
<dbReference type="HOGENOM" id="CLU_023075_0_1_1"/>
<dbReference type="InParanoid" id="Q9JJE4"/>
<dbReference type="OMA" id="HHACPPD"/>
<dbReference type="OrthoDB" id="535992at2759"/>
<dbReference type="PhylomeDB" id="Q9JJE4"/>
<dbReference type="TreeFam" id="TF323692"/>
<dbReference type="BioGRID-ORCS" id="76498">
    <property type="hits" value="5 hits in 81 CRISPR screens"/>
</dbReference>
<dbReference type="ChiTaRS" id="Paqr4">
    <property type="organism name" value="mouse"/>
</dbReference>
<dbReference type="PRO" id="PR:Q9JJE4"/>
<dbReference type="Proteomes" id="UP000000589">
    <property type="component" value="Chromosome 17"/>
</dbReference>
<dbReference type="RNAct" id="Q9JJE4">
    <property type="molecule type" value="protein"/>
</dbReference>
<dbReference type="Bgee" id="ENSMUSG00000023909">
    <property type="expression patterns" value="Expressed in pyloric antrum and 211 other cell types or tissues"/>
</dbReference>
<dbReference type="GO" id="GO:0000139">
    <property type="term" value="C:Golgi membrane"/>
    <property type="evidence" value="ECO:0007669"/>
    <property type="project" value="UniProtKB-SubCell"/>
</dbReference>
<dbReference type="GO" id="GO:0060090">
    <property type="term" value="F:molecular adaptor activity"/>
    <property type="evidence" value="ECO:0000314"/>
    <property type="project" value="UniProtKB"/>
</dbReference>
<dbReference type="GO" id="GO:0050821">
    <property type="term" value="P:protein stabilization"/>
    <property type="evidence" value="ECO:0000314"/>
    <property type="project" value="UniProtKB"/>
</dbReference>
<dbReference type="GO" id="GO:2000303">
    <property type="term" value="P:regulation of ceramide biosynthetic process"/>
    <property type="evidence" value="ECO:0000314"/>
    <property type="project" value="UniProtKB"/>
</dbReference>
<dbReference type="InterPro" id="IPR004254">
    <property type="entry name" value="AdipoR/HlyIII-related"/>
</dbReference>
<dbReference type="PANTHER" id="PTHR20855">
    <property type="entry name" value="ADIPOR/PROGESTIN RECEPTOR-RELATED"/>
    <property type="match status" value="1"/>
</dbReference>
<dbReference type="PANTHER" id="PTHR20855:SF138">
    <property type="entry name" value="PROGESTIN AND ADIPOQ RECEPTOR FAMILY MEMBER 4"/>
    <property type="match status" value="1"/>
</dbReference>
<dbReference type="Pfam" id="PF03006">
    <property type="entry name" value="HlyIII"/>
    <property type="match status" value="1"/>
</dbReference>
<sequence length="273" mass="29215">MAFLTGPRLLDWASSPPHLQFNKFVLTGYRPASSGSGCLRSLFYLHNELGNIYTHGLALLGFLVLVPMTMPWSQLGKDGWLGGTHCVACLVPPAASVLYHLFMCHQGGSPVYTRLLALDMCGVCLVNTLGALPIIHCTLACRPWLRPAALMGYTALSGVAGWRALTAPSTSARLRAFGWQAGARLLVFGARGVGLGSGAPGSLPCYLRMDALALLGGLVNVARLPERWGPGRFDYWGNSHQIMHLLSVGSILQLHAGVVPDLLWAAHHACPPD</sequence>
<reference key="1">
    <citation type="journal article" date="2005" name="J. Mol. Evol.">
        <title>PAQR proteins: a novel membrane receptor family defined by an ancient 7-transmembrane pass motif.</title>
        <authorList>
            <person name="Tang Y.T."/>
            <person name="Hu T."/>
            <person name="Arterburn M."/>
            <person name="Boyle B."/>
            <person name="Bright J.M."/>
            <person name="Emtage P.C."/>
            <person name="Funk W.D."/>
        </authorList>
    </citation>
    <scope>NUCLEOTIDE SEQUENCE [MRNA]</scope>
    <source>
        <strain>C57BL/6J</strain>
    </source>
</reference>
<reference key="2">
    <citation type="submission" date="2000-04" db="EMBL/GenBank/DDBJ databases">
        <title>Isolation of full-length cDNA clones from mouse brain cDNA library made by oligo-capping method.</title>
        <authorList>
            <person name="Osada N."/>
            <person name="Kusuda J."/>
            <person name="Tanuma R."/>
            <person name="Ito A."/>
            <person name="Hirata M."/>
            <person name="Sugano S."/>
            <person name="Hashimoto K."/>
        </authorList>
    </citation>
    <scope>NUCLEOTIDE SEQUENCE [LARGE SCALE MRNA]</scope>
    <source>
        <strain>C57BL/6J</strain>
        <tissue>Brain</tissue>
    </source>
</reference>
<reference key="3">
    <citation type="journal article" date="2005" name="Science">
        <title>The transcriptional landscape of the mammalian genome.</title>
        <authorList>
            <person name="Carninci P."/>
            <person name="Kasukawa T."/>
            <person name="Katayama S."/>
            <person name="Gough J."/>
            <person name="Frith M.C."/>
            <person name="Maeda N."/>
            <person name="Oyama R."/>
            <person name="Ravasi T."/>
            <person name="Lenhard B."/>
            <person name="Wells C."/>
            <person name="Kodzius R."/>
            <person name="Shimokawa K."/>
            <person name="Bajic V.B."/>
            <person name="Brenner S.E."/>
            <person name="Batalov S."/>
            <person name="Forrest A.R."/>
            <person name="Zavolan M."/>
            <person name="Davis M.J."/>
            <person name="Wilming L.G."/>
            <person name="Aidinis V."/>
            <person name="Allen J.E."/>
            <person name="Ambesi-Impiombato A."/>
            <person name="Apweiler R."/>
            <person name="Aturaliya R.N."/>
            <person name="Bailey T.L."/>
            <person name="Bansal M."/>
            <person name="Baxter L."/>
            <person name="Beisel K.W."/>
            <person name="Bersano T."/>
            <person name="Bono H."/>
            <person name="Chalk A.M."/>
            <person name="Chiu K.P."/>
            <person name="Choudhary V."/>
            <person name="Christoffels A."/>
            <person name="Clutterbuck D.R."/>
            <person name="Crowe M.L."/>
            <person name="Dalla E."/>
            <person name="Dalrymple B.P."/>
            <person name="de Bono B."/>
            <person name="Della Gatta G."/>
            <person name="di Bernardo D."/>
            <person name="Down T."/>
            <person name="Engstrom P."/>
            <person name="Fagiolini M."/>
            <person name="Faulkner G."/>
            <person name="Fletcher C.F."/>
            <person name="Fukushima T."/>
            <person name="Furuno M."/>
            <person name="Futaki S."/>
            <person name="Gariboldi M."/>
            <person name="Georgii-Hemming P."/>
            <person name="Gingeras T.R."/>
            <person name="Gojobori T."/>
            <person name="Green R.E."/>
            <person name="Gustincich S."/>
            <person name="Harbers M."/>
            <person name="Hayashi Y."/>
            <person name="Hensch T.K."/>
            <person name="Hirokawa N."/>
            <person name="Hill D."/>
            <person name="Huminiecki L."/>
            <person name="Iacono M."/>
            <person name="Ikeo K."/>
            <person name="Iwama A."/>
            <person name="Ishikawa T."/>
            <person name="Jakt M."/>
            <person name="Kanapin A."/>
            <person name="Katoh M."/>
            <person name="Kawasawa Y."/>
            <person name="Kelso J."/>
            <person name="Kitamura H."/>
            <person name="Kitano H."/>
            <person name="Kollias G."/>
            <person name="Krishnan S.P."/>
            <person name="Kruger A."/>
            <person name="Kummerfeld S.K."/>
            <person name="Kurochkin I.V."/>
            <person name="Lareau L.F."/>
            <person name="Lazarevic D."/>
            <person name="Lipovich L."/>
            <person name="Liu J."/>
            <person name="Liuni S."/>
            <person name="McWilliam S."/>
            <person name="Madan Babu M."/>
            <person name="Madera M."/>
            <person name="Marchionni L."/>
            <person name="Matsuda H."/>
            <person name="Matsuzawa S."/>
            <person name="Miki H."/>
            <person name="Mignone F."/>
            <person name="Miyake S."/>
            <person name="Morris K."/>
            <person name="Mottagui-Tabar S."/>
            <person name="Mulder N."/>
            <person name="Nakano N."/>
            <person name="Nakauchi H."/>
            <person name="Ng P."/>
            <person name="Nilsson R."/>
            <person name="Nishiguchi S."/>
            <person name="Nishikawa S."/>
            <person name="Nori F."/>
            <person name="Ohara O."/>
            <person name="Okazaki Y."/>
            <person name="Orlando V."/>
            <person name="Pang K.C."/>
            <person name="Pavan W.J."/>
            <person name="Pavesi G."/>
            <person name="Pesole G."/>
            <person name="Petrovsky N."/>
            <person name="Piazza S."/>
            <person name="Reed J."/>
            <person name="Reid J.F."/>
            <person name="Ring B.Z."/>
            <person name="Ringwald M."/>
            <person name="Rost B."/>
            <person name="Ruan Y."/>
            <person name="Salzberg S.L."/>
            <person name="Sandelin A."/>
            <person name="Schneider C."/>
            <person name="Schoenbach C."/>
            <person name="Sekiguchi K."/>
            <person name="Semple C.A."/>
            <person name="Seno S."/>
            <person name="Sessa L."/>
            <person name="Sheng Y."/>
            <person name="Shibata Y."/>
            <person name="Shimada H."/>
            <person name="Shimada K."/>
            <person name="Silva D."/>
            <person name="Sinclair B."/>
            <person name="Sperling S."/>
            <person name="Stupka E."/>
            <person name="Sugiura K."/>
            <person name="Sultana R."/>
            <person name="Takenaka Y."/>
            <person name="Taki K."/>
            <person name="Tammoja K."/>
            <person name="Tan S.L."/>
            <person name="Tang S."/>
            <person name="Taylor M.S."/>
            <person name="Tegner J."/>
            <person name="Teichmann S.A."/>
            <person name="Ueda H.R."/>
            <person name="van Nimwegen E."/>
            <person name="Verardo R."/>
            <person name="Wei C.L."/>
            <person name="Yagi K."/>
            <person name="Yamanishi H."/>
            <person name="Zabarovsky E."/>
            <person name="Zhu S."/>
            <person name="Zimmer A."/>
            <person name="Hide W."/>
            <person name="Bult C."/>
            <person name="Grimmond S.M."/>
            <person name="Teasdale R.D."/>
            <person name="Liu E.T."/>
            <person name="Brusic V."/>
            <person name="Quackenbush J."/>
            <person name="Wahlestedt C."/>
            <person name="Mattick J.S."/>
            <person name="Hume D.A."/>
            <person name="Kai C."/>
            <person name="Sasaki D."/>
            <person name="Tomaru Y."/>
            <person name="Fukuda S."/>
            <person name="Kanamori-Katayama M."/>
            <person name="Suzuki M."/>
            <person name="Aoki J."/>
            <person name="Arakawa T."/>
            <person name="Iida J."/>
            <person name="Imamura K."/>
            <person name="Itoh M."/>
            <person name="Kato T."/>
            <person name="Kawaji H."/>
            <person name="Kawagashira N."/>
            <person name="Kawashima T."/>
            <person name="Kojima M."/>
            <person name="Kondo S."/>
            <person name="Konno H."/>
            <person name="Nakano K."/>
            <person name="Ninomiya N."/>
            <person name="Nishio T."/>
            <person name="Okada M."/>
            <person name="Plessy C."/>
            <person name="Shibata K."/>
            <person name="Shiraki T."/>
            <person name="Suzuki S."/>
            <person name="Tagami M."/>
            <person name="Waki K."/>
            <person name="Watahiki A."/>
            <person name="Okamura-Oho Y."/>
            <person name="Suzuki H."/>
            <person name="Kawai J."/>
            <person name="Hayashizaki Y."/>
        </authorList>
    </citation>
    <scope>NUCLEOTIDE SEQUENCE [LARGE SCALE MRNA]</scope>
    <source>
        <strain>C57BL/6J</strain>
        <tissue>Bone marrow</tissue>
        <tissue>Brain cortex</tissue>
        <tissue>Cecum</tissue>
        <tissue>Cerebellum</tissue>
        <tissue>Retina</tissue>
    </source>
</reference>
<reference key="4">
    <citation type="journal article" date="2004" name="Genome Res.">
        <title>The status, quality, and expansion of the NIH full-length cDNA project: the Mammalian Gene Collection (MGC).</title>
        <authorList>
            <consortium name="The MGC Project Team"/>
        </authorList>
    </citation>
    <scope>NUCLEOTIDE SEQUENCE [LARGE SCALE MRNA]</scope>
    <source>
        <strain>FVB/N</strain>
        <tissue>Eye</tissue>
        <tissue>Liver</tissue>
    </source>
</reference>
<reference key="5">
    <citation type="journal article" date="2024" name="Nat. Metab.">
        <title>PAQR4 regulates adipocyte function and systemic metabolic health by mediating ceramide levels.</title>
        <authorList>
            <person name="Zhu Q."/>
            <person name="Chen S."/>
            <person name="Funcke J.B."/>
            <person name="Straub L.G."/>
            <person name="Lin Q."/>
            <person name="Zhao S."/>
            <person name="Joung C."/>
            <person name="Zhang Z."/>
            <person name="Kim D.S."/>
            <person name="Li N."/>
            <person name="Gliniak C.M."/>
            <person name="Lee C."/>
            <person name="Cebrian-Serrano A."/>
            <person name="Pedersen L."/>
            <person name="Halberg N."/>
            <person name="Gordillo R."/>
            <person name="Kusminski C.M."/>
            <person name="Scherer P.E."/>
        </authorList>
    </citation>
    <scope>FUNCTION</scope>
    <scope>DISRUPTION PHENOTYPE</scope>
    <scope>TISSUE SPECIFICITY</scope>
    <scope>INDUCTION BY HIGH FAT DIET</scope>
</reference>
<keyword id="KW-0333">Golgi apparatus</keyword>
<keyword id="KW-0472">Membrane</keyword>
<keyword id="KW-1185">Reference proteome</keyword>
<keyword id="KW-0812">Transmembrane</keyword>
<keyword id="KW-1133">Transmembrane helix</keyword>
<protein>
    <recommendedName>
        <fullName evidence="4">Progestin and adipoQ receptor family member 4</fullName>
    </recommendedName>
    <alternativeName>
        <fullName>Progestin and adipoQ receptor family member IV</fullName>
    </alternativeName>
</protein>
<name>PAQR4_MOUSE</name>